<comment type="function">
    <text evidence="1">RNA-binding component of the eukaryotic translation initiation factor 3 (eIF-3) complex, which is involved in protein synthesis of a specialized repertoire of mRNAs and, together with other initiation factors, stimulates binding of mRNA and methionyl-tRNAi to the 40S ribosome. The eIF-3 complex specifically targets and initiates translation of a subset of mRNAs involved in cell proliferation.</text>
</comment>
<comment type="subunit">
    <text evidence="1">Component of the eukaryotic translation initiation factor 3 (eIF-3) complex.</text>
</comment>
<comment type="subcellular location">
    <subcellularLocation>
        <location evidence="1">Cytoplasm</location>
    </subcellularLocation>
</comment>
<comment type="similarity">
    <text evidence="1">Belongs to the eIF-3 subunit B family.</text>
</comment>
<organism>
    <name type="scientific">Coccidioides immitis (strain RS)</name>
    <name type="common">Valley fever fungus</name>
    <dbReference type="NCBI Taxonomy" id="246410"/>
    <lineage>
        <taxon>Eukaryota</taxon>
        <taxon>Fungi</taxon>
        <taxon>Dikarya</taxon>
        <taxon>Ascomycota</taxon>
        <taxon>Pezizomycotina</taxon>
        <taxon>Eurotiomycetes</taxon>
        <taxon>Eurotiomycetidae</taxon>
        <taxon>Onygenales</taxon>
        <taxon>Onygenaceae</taxon>
        <taxon>Coccidioides</taxon>
    </lineage>
</organism>
<protein>
    <recommendedName>
        <fullName evidence="1">Eukaryotic translation initiation factor 3 subunit B</fullName>
        <shortName evidence="1">eIF3b</shortName>
    </recommendedName>
    <alternativeName>
        <fullName evidence="1">Eukaryotic translation initiation factor 3 90 kDa subunit homolog</fullName>
        <shortName evidence="1">eIF3 p90</shortName>
    </alternativeName>
    <alternativeName>
        <fullName>Translation initiation factor eIF3 p90 subunit homolog</fullName>
    </alternativeName>
</protein>
<gene>
    <name evidence="1" type="primary">PRT1</name>
    <name type="ORF">CIMG_09966</name>
</gene>
<sequence>MAPSFDTLSEQDLHEEEVEIDFSDLKAQYEVRLEEGLDAFVVIDGLPVVPEESKPKLIKFLLKKLNTVGRTREDAIFMPLNEKGMSEGFAFVEYDTPEQAIAATKHLHGTPLDKKHTLAVNKLTDIDRYGREGRVDEEYTPPKIEPFQEKEHLRSWLGDPNARDQFAMYRGDKVGVFWNMKNNPPENVVDRDHWTQLFVQWSPLGTYLASVHPQGVQLWGGPQFGKQKQFPHPFVSLMEFSPGEKYLTTWSSRPIQLDGPPGALSYEEEGKNIIIWDITTGKPLRSFVSHELAAPAGPDGDAAQAKKKVQWPAFKWSADEKFVARMLPGQSISIYELPRMNLLDRTSVKIEGVMDFEWSPATVQREGVKQSEQLLSFWTPEIGSNPAKVGLMSIPSKEVVRTRNLFNVSDVKLHWQSQGAYVCVKVDRHSKSKKSLATNLEIFRVREKGVPVEVVDSLKDTVINFAWEPKGNRFVLITTGEVPTGTAVPPKTAVSFFAPEKTKSGAAGNFKLVRTIEKKTSNGIYWSPKGRFVVVATVHSQQHFDIDFWDLDFEGEKPENEKDLSANLQLMKTNEHFGVTDIDWDPTGRYVVSSASAWTHSLENGYHIHTFSGTTLTEHAVEKFKQLVWRPRPPTLLSKEEQKKVRRNLREYSREFDEEDKYAVDIANTAIVEMRKRLLNEWTAWLKKEKEMVEEEREVLGLPKYEEEPAAKPTPGAEDDTIVEEIVEEIIEESEEIVA</sequence>
<dbReference type="EMBL" id="GG704915">
    <property type="protein sequence ID" value="EAS27361.3"/>
    <property type="molecule type" value="Genomic_DNA"/>
</dbReference>
<dbReference type="RefSeq" id="XP_001238944.1">
    <property type="nucleotide sequence ID" value="XM_001238943.2"/>
</dbReference>
<dbReference type="SMR" id="Q1DI97"/>
<dbReference type="FunCoup" id="Q1DI97">
    <property type="interactions" value="1299"/>
</dbReference>
<dbReference type="STRING" id="246410.Q1DI97"/>
<dbReference type="GeneID" id="4558133"/>
<dbReference type="KEGG" id="cim:CIMG_09966"/>
<dbReference type="VEuPathDB" id="FungiDB:CIMG_09966"/>
<dbReference type="InParanoid" id="Q1DI97"/>
<dbReference type="OMA" id="LWGGPQF"/>
<dbReference type="OrthoDB" id="10250414at2759"/>
<dbReference type="Proteomes" id="UP000001261">
    <property type="component" value="Unassembled WGS sequence"/>
</dbReference>
<dbReference type="GO" id="GO:0016282">
    <property type="term" value="C:eukaryotic 43S preinitiation complex"/>
    <property type="evidence" value="ECO:0007669"/>
    <property type="project" value="UniProtKB-UniRule"/>
</dbReference>
<dbReference type="GO" id="GO:0033290">
    <property type="term" value="C:eukaryotic 48S preinitiation complex"/>
    <property type="evidence" value="ECO:0007669"/>
    <property type="project" value="UniProtKB-UniRule"/>
</dbReference>
<dbReference type="GO" id="GO:0005852">
    <property type="term" value="C:eukaryotic translation initiation factor 3 complex"/>
    <property type="evidence" value="ECO:0007669"/>
    <property type="project" value="UniProtKB-UniRule"/>
</dbReference>
<dbReference type="GO" id="GO:0003723">
    <property type="term" value="F:RNA binding"/>
    <property type="evidence" value="ECO:0007669"/>
    <property type="project" value="UniProtKB-UniRule"/>
</dbReference>
<dbReference type="GO" id="GO:0003743">
    <property type="term" value="F:translation initiation factor activity"/>
    <property type="evidence" value="ECO:0007669"/>
    <property type="project" value="UniProtKB-UniRule"/>
</dbReference>
<dbReference type="GO" id="GO:0031369">
    <property type="term" value="F:translation initiation factor binding"/>
    <property type="evidence" value="ECO:0007669"/>
    <property type="project" value="InterPro"/>
</dbReference>
<dbReference type="GO" id="GO:0001732">
    <property type="term" value="P:formation of cytoplasmic translation initiation complex"/>
    <property type="evidence" value="ECO:0007669"/>
    <property type="project" value="UniProtKB-UniRule"/>
</dbReference>
<dbReference type="CDD" id="cd12278">
    <property type="entry name" value="RRM_eIF3B"/>
    <property type="match status" value="1"/>
</dbReference>
<dbReference type="FunFam" id="2.130.10.10:FF:000419">
    <property type="entry name" value="Eukaryotic translation initiation factor 3 subunit B"/>
    <property type="match status" value="1"/>
</dbReference>
<dbReference type="FunFam" id="3.30.70.330:FF:000235">
    <property type="entry name" value="Eukaryotic translation initiation factor 3 subunit B"/>
    <property type="match status" value="1"/>
</dbReference>
<dbReference type="Gene3D" id="3.30.70.330">
    <property type="match status" value="1"/>
</dbReference>
<dbReference type="Gene3D" id="2.130.10.10">
    <property type="entry name" value="YVTN repeat-like/Quinoprotein amine dehydrogenase"/>
    <property type="match status" value="2"/>
</dbReference>
<dbReference type="HAMAP" id="MF_03001">
    <property type="entry name" value="eIF3b"/>
    <property type="match status" value="1"/>
</dbReference>
<dbReference type="InterPro" id="IPR011400">
    <property type="entry name" value="EIF3B"/>
</dbReference>
<dbReference type="InterPro" id="IPR034363">
    <property type="entry name" value="eIF3B_RRM"/>
</dbReference>
<dbReference type="InterPro" id="IPR012677">
    <property type="entry name" value="Nucleotide-bd_a/b_plait_sf"/>
</dbReference>
<dbReference type="InterPro" id="IPR035979">
    <property type="entry name" value="RBD_domain_sf"/>
</dbReference>
<dbReference type="InterPro" id="IPR000504">
    <property type="entry name" value="RRM_dom"/>
</dbReference>
<dbReference type="InterPro" id="IPR013979">
    <property type="entry name" value="TIF_beta_prop-like"/>
</dbReference>
<dbReference type="InterPro" id="IPR015943">
    <property type="entry name" value="WD40/YVTN_repeat-like_dom_sf"/>
</dbReference>
<dbReference type="PANTHER" id="PTHR14068">
    <property type="entry name" value="EUKARYOTIC TRANSLATION INITIATION FACTOR 3 EIF3 -RELATED"/>
    <property type="match status" value="1"/>
</dbReference>
<dbReference type="PANTHER" id="PTHR14068:SF0">
    <property type="entry name" value="EUKARYOTIC TRANSLATION INITIATION FACTOR 3 SUBUNIT B"/>
    <property type="match status" value="1"/>
</dbReference>
<dbReference type="Pfam" id="PF08662">
    <property type="entry name" value="eIF2A"/>
    <property type="match status" value="1"/>
</dbReference>
<dbReference type="Pfam" id="PF00076">
    <property type="entry name" value="RRM_1"/>
    <property type="match status" value="1"/>
</dbReference>
<dbReference type="PIRSF" id="PIRSF036424">
    <property type="entry name" value="eIF3b"/>
    <property type="match status" value="1"/>
</dbReference>
<dbReference type="SMART" id="SM00360">
    <property type="entry name" value="RRM"/>
    <property type="match status" value="1"/>
</dbReference>
<dbReference type="SUPFAM" id="SSF82171">
    <property type="entry name" value="DPP6 N-terminal domain-like"/>
    <property type="match status" value="1"/>
</dbReference>
<dbReference type="SUPFAM" id="SSF54928">
    <property type="entry name" value="RNA-binding domain, RBD"/>
    <property type="match status" value="1"/>
</dbReference>
<dbReference type="PROSITE" id="PS50102">
    <property type="entry name" value="RRM"/>
    <property type="match status" value="1"/>
</dbReference>
<keyword id="KW-0963">Cytoplasm</keyword>
<keyword id="KW-0396">Initiation factor</keyword>
<keyword id="KW-0648">Protein biosynthesis</keyword>
<keyword id="KW-1185">Reference proteome</keyword>
<keyword id="KW-0677">Repeat</keyword>
<keyword id="KW-0694">RNA-binding</keyword>
<keyword id="KW-0853">WD repeat</keyword>
<accession>Q1DI97</accession>
<accession>J3K132</accession>
<proteinExistence type="inferred from homology"/>
<name>EIF3B_COCIM</name>
<evidence type="ECO:0000255" key="1">
    <source>
        <dbReference type="HAMAP-Rule" id="MF_03001"/>
    </source>
</evidence>
<reference key="1">
    <citation type="journal article" date="2009" name="Genome Res.">
        <title>Comparative genomic analyses of the human fungal pathogens Coccidioides and their relatives.</title>
        <authorList>
            <person name="Sharpton T.J."/>
            <person name="Stajich J.E."/>
            <person name="Rounsley S.D."/>
            <person name="Gardner M.J."/>
            <person name="Wortman J.R."/>
            <person name="Jordar V.S."/>
            <person name="Maiti R."/>
            <person name="Kodira C.D."/>
            <person name="Neafsey D.E."/>
            <person name="Zeng Q."/>
            <person name="Hung C.-Y."/>
            <person name="McMahan C."/>
            <person name="Muszewska A."/>
            <person name="Grynberg M."/>
            <person name="Mandel M.A."/>
            <person name="Kellner E.M."/>
            <person name="Barker B.M."/>
            <person name="Galgiani J.N."/>
            <person name="Orbach M.J."/>
            <person name="Kirkland T.N."/>
            <person name="Cole G.T."/>
            <person name="Henn M.R."/>
            <person name="Birren B.W."/>
            <person name="Taylor J.W."/>
        </authorList>
    </citation>
    <scope>NUCLEOTIDE SEQUENCE [LARGE SCALE GENOMIC DNA]</scope>
    <source>
        <strain>RS</strain>
    </source>
</reference>
<reference key="2">
    <citation type="journal article" date="2010" name="Genome Res.">
        <title>Population genomic sequencing of Coccidioides fungi reveals recent hybridization and transposon control.</title>
        <authorList>
            <person name="Neafsey D.E."/>
            <person name="Barker B.M."/>
            <person name="Sharpton T.J."/>
            <person name="Stajich J.E."/>
            <person name="Park D.J."/>
            <person name="Whiston E."/>
            <person name="Hung C.-Y."/>
            <person name="McMahan C."/>
            <person name="White J."/>
            <person name="Sykes S."/>
            <person name="Heiman D."/>
            <person name="Young S."/>
            <person name="Zeng Q."/>
            <person name="Abouelleil A."/>
            <person name="Aftuck L."/>
            <person name="Bessette D."/>
            <person name="Brown A."/>
            <person name="FitzGerald M."/>
            <person name="Lui A."/>
            <person name="Macdonald J.P."/>
            <person name="Priest M."/>
            <person name="Orbach M.J."/>
            <person name="Galgiani J.N."/>
            <person name="Kirkland T.N."/>
            <person name="Cole G.T."/>
            <person name="Birren B.W."/>
            <person name="Henn M.R."/>
            <person name="Taylor J.W."/>
            <person name="Rounsley S.D."/>
        </authorList>
    </citation>
    <scope>GENOME REANNOTATION</scope>
    <source>
        <strain>RS</strain>
    </source>
</reference>
<feature type="chain" id="PRO_0000363816" description="Eukaryotic translation initiation factor 3 subunit B">
    <location>
        <begin position="1"/>
        <end position="739"/>
    </location>
</feature>
<feature type="domain" description="RRM" evidence="1">
    <location>
        <begin position="39"/>
        <end position="125"/>
    </location>
</feature>
<feature type="repeat" description="WD 1">
    <location>
        <begin position="191"/>
        <end position="229"/>
    </location>
</feature>
<feature type="repeat" description="WD 2">
    <location>
        <begin position="231"/>
        <end position="288"/>
    </location>
</feature>
<feature type="repeat" description="WD 3">
    <location>
        <begin position="457"/>
        <end position="498"/>
    </location>
</feature>
<feature type="repeat" description="WD 4">
    <location>
        <begin position="516"/>
        <end position="559"/>
    </location>
</feature>
<feature type="repeat" description="WD 5">
    <location>
        <begin position="574"/>
        <end position="612"/>
    </location>
</feature>